<name>FLIK_BUCAP</name>
<accession>Q8KA40</accession>
<sequence>MFKYSDNIALEGKLSDNQNNNLTSLNFFSKSNINAFKKLFINKGIEFDNVSTKKKKEEDKNIPSINFVITNLINILNKKDTMLKETMLNHIAKKNYKCRNIQRKNKDKNFKLKKYIKLDIETKNETKKNQKYKKFIVHPIFKKSIEIKNQSNEFKQINIFHNFNDKFFFRKDRYSNIKSNKSIFSDNKILRCFRNFRKNTPDLFFLKNINKISNVTTYETNTFKDNNNKKHLKCVNSSLELLNSKKNDKWKQVINHQILLSISNKENKAEISFTPEYLGSIHIKIKMRNDQATLNFISNHDEVKVFLKNCIPFLKNSLMKNGIQLEKINIYNSSFSKNHISQKNKRIVKNYFFHGNEFKKTFNFQENYMKLIQYKSIDMYI</sequence>
<gene>
    <name type="primary">fliK</name>
    <name type="ordered locus">BUsg_072</name>
</gene>
<feature type="chain" id="PRO_0000180906" description="Flagellar hook-length control protein">
    <location>
        <begin position="1"/>
        <end position="381"/>
    </location>
</feature>
<organism>
    <name type="scientific">Buchnera aphidicola subsp. Schizaphis graminum (strain Sg)</name>
    <dbReference type="NCBI Taxonomy" id="198804"/>
    <lineage>
        <taxon>Bacteria</taxon>
        <taxon>Pseudomonadati</taxon>
        <taxon>Pseudomonadota</taxon>
        <taxon>Gammaproteobacteria</taxon>
        <taxon>Enterobacterales</taxon>
        <taxon>Erwiniaceae</taxon>
        <taxon>Buchnera</taxon>
    </lineage>
</organism>
<reference key="1">
    <citation type="journal article" date="2002" name="Science">
        <title>50 million years of genomic stasis in endosymbiotic bacteria.</title>
        <authorList>
            <person name="Tamas I."/>
            <person name="Klasson L."/>
            <person name="Canbaeck B."/>
            <person name="Naeslund A.K."/>
            <person name="Eriksson A.-S."/>
            <person name="Wernegreen J.J."/>
            <person name="Sandstroem J.P."/>
            <person name="Moran N.A."/>
            <person name="Andersson S.G.E."/>
        </authorList>
    </citation>
    <scope>NUCLEOTIDE SEQUENCE [LARGE SCALE GENOMIC DNA]</scope>
    <source>
        <strain>Sg</strain>
    </source>
</reference>
<proteinExistence type="inferred from homology"/>
<dbReference type="EMBL" id="AE013218">
    <property type="protein sequence ID" value="AAM67642.1"/>
    <property type="molecule type" value="Genomic_DNA"/>
</dbReference>
<dbReference type="RefSeq" id="WP_011053608.1">
    <property type="nucleotide sequence ID" value="NC_004061.1"/>
</dbReference>
<dbReference type="SMR" id="Q8KA40"/>
<dbReference type="STRING" id="198804.BUsg_072"/>
<dbReference type="GeneID" id="93004066"/>
<dbReference type="KEGG" id="bas:BUsg_072"/>
<dbReference type="eggNOG" id="COG3144">
    <property type="taxonomic scope" value="Bacteria"/>
</dbReference>
<dbReference type="HOGENOM" id="CLU_707273_0_0_6"/>
<dbReference type="Proteomes" id="UP000000416">
    <property type="component" value="Chromosome"/>
</dbReference>
<dbReference type="GO" id="GO:0009424">
    <property type="term" value="C:bacterial-type flagellum hook"/>
    <property type="evidence" value="ECO:0007669"/>
    <property type="project" value="InterPro"/>
</dbReference>
<dbReference type="GO" id="GO:0044780">
    <property type="term" value="P:bacterial-type flagellum assembly"/>
    <property type="evidence" value="ECO:0007669"/>
    <property type="project" value="InterPro"/>
</dbReference>
<dbReference type="CDD" id="cd17470">
    <property type="entry name" value="T3SS_Flik_C"/>
    <property type="match status" value="1"/>
</dbReference>
<dbReference type="Gene3D" id="3.30.750.140">
    <property type="match status" value="1"/>
</dbReference>
<dbReference type="InterPro" id="IPR001635">
    <property type="entry name" value="Flag_hook_Flik"/>
</dbReference>
<dbReference type="InterPro" id="IPR021136">
    <property type="entry name" value="Flagellar_hook_control-like_C"/>
</dbReference>
<dbReference type="InterPro" id="IPR052563">
    <property type="entry name" value="FliK"/>
</dbReference>
<dbReference type="InterPro" id="IPR038610">
    <property type="entry name" value="FliK-like_C_sf"/>
</dbReference>
<dbReference type="PANTHER" id="PTHR37533">
    <property type="entry name" value="FLAGELLAR HOOK-LENGTH CONTROL PROTEIN"/>
    <property type="match status" value="1"/>
</dbReference>
<dbReference type="PANTHER" id="PTHR37533:SF2">
    <property type="entry name" value="FLAGELLAR HOOK-LENGTH CONTROL PROTEIN"/>
    <property type="match status" value="1"/>
</dbReference>
<dbReference type="Pfam" id="PF02120">
    <property type="entry name" value="Flg_hook"/>
    <property type="match status" value="1"/>
</dbReference>
<dbReference type="PRINTS" id="PR01007">
    <property type="entry name" value="FLGHOOKFLIK"/>
</dbReference>
<comment type="function">
    <text evidence="1">Controls the length of the flagellar hook.</text>
</comment>
<comment type="domain">
    <text>Two-domain protein with the central portion of the sequence acting as a hinge or connector between the two.</text>
</comment>
<comment type="similarity">
    <text evidence="2">Belongs to the FliK family.</text>
</comment>
<protein>
    <recommendedName>
        <fullName>Flagellar hook-length control protein</fullName>
    </recommendedName>
</protein>
<evidence type="ECO:0000250" key="1"/>
<evidence type="ECO:0000305" key="2"/>
<keyword id="KW-1005">Bacterial flagellum biogenesis</keyword>